<gene>
    <name evidence="1" type="primary">pheS</name>
    <name type="ordered locus">Vapar_1874</name>
</gene>
<feature type="chain" id="PRO_1000204839" description="Phenylalanine--tRNA ligase alpha subunit">
    <location>
        <begin position="1"/>
        <end position="358"/>
    </location>
</feature>
<feature type="binding site" evidence="1">
    <location>
        <position position="279"/>
    </location>
    <ligand>
        <name>Mg(2+)</name>
        <dbReference type="ChEBI" id="CHEBI:18420"/>
        <note>shared with beta subunit</note>
    </ligand>
</feature>
<protein>
    <recommendedName>
        <fullName evidence="1">Phenylalanine--tRNA ligase alpha subunit</fullName>
        <ecNumber evidence="1">6.1.1.20</ecNumber>
    </recommendedName>
    <alternativeName>
        <fullName evidence="1">Phenylalanyl-tRNA synthetase alpha subunit</fullName>
        <shortName evidence="1">PheRS</shortName>
    </alternativeName>
</protein>
<dbReference type="EC" id="6.1.1.20" evidence="1"/>
<dbReference type="EMBL" id="CP001635">
    <property type="protein sequence ID" value="ACS18524.1"/>
    <property type="molecule type" value="Genomic_DNA"/>
</dbReference>
<dbReference type="SMR" id="C5CUU6"/>
<dbReference type="STRING" id="543728.Vapar_1874"/>
<dbReference type="KEGG" id="vap:Vapar_1874"/>
<dbReference type="eggNOG" id="COG0016">
    <property type="taxonomic scope" value="Bacteria"/>
</dbReference>
<dbReference type="HOGENOM" id="CLU_025086_0_1_4"/>
<dbReference type="OrthoDB" id="9800719at2"/>
<dbReference type="GO" id="GO:0005737">
    <property type="term" value="C:cytoplasm"/>
    <property type="evidence" value="ECO:0007669"/>
    <property type="project" value="UniProtKB-SubCell"/>
</dbReference>
<dbReference type="GO" id="GO:0005524">
    <property type="term" value="F:ATP binding"/>
    <property type="evidence" value="ECO:0007669"/>
    <property type="project" value="UniProtKB-UniRule"/>
</dbReference>
<dbReference type="GO" id="GO:0000287">
    <property type="term" value="F:magnesium ion binding"/>
    <property type="evidence" value="ECO:0007669"/>
    <property type="project" value="UniProtKB-UniRule"/>
</dbReference>
<dbReference type="GO" id="GO:0004826">
    <property type="term" value="F:phenylalanine-tRNA ligase activity"/>
    <property type="evidence" value="ECO:0007669"/>
    <property type="project" value="UniProtKB-UniRule"/>
</dbReference>
<dbReference type="GO" id="GO:0000049">
    <property type="term" value="F:tRNA binding"/>
    <property type="evidence" value="ECO:0007669"/>
    <property type="project" value="InterPro"/>
</dbReference>
<dbReference type="GO" id="GO:0006432">
    <property type="term" value="P:phenylalanyl-tRNA aminoacylation"/>
    <property type="evidence" value="ECO:0007669"/>
    <property type="project" value="UniProtKB-UniRule"/>
</dbReference>
<dbReference type="CDD" id="cd00496">
    <property type="entry name" value="PheRS_alpha_core"/>
    <property type="match status" value="1"/>
</dbReference>
<dbReference type="Gene3D" id="3.30.930.10">
    <property type="entry name" value="Bira Bifunctional Protein, Domain 2"/>
    <property type="match status" value="1"/>
</dbReference>
<dbReference type="HAMAP" id="MF_00281">
    <property type="entry name" value="Phe_tRNA_synth_alpha1"/>
    <property type="match status" value="1"/>
</dbReference>
<dbReference type="InterPro" id="IPR006195">
    <property type="entry name" value="aa-tRNA-synth_II"/>
</dbReference>
<dbReference type="InterPro" id="IPR045864">
    <property type="entry name" value="aa-tRNA-synth_II/BPL/LPL"/>
</dbReference>
<dbReference type="InterPro" id="IPR004529">
    <property type="entry name" value="Phe-tRNA-synth_IIc_asu"/>
</dbReference>
<dbReference type="InterPro" id="IPR004188">
    <property type="entry name" value="Phe-tRNA_ligase_II_N"/>
</dbReference>
<dbReference type="InterPro" id="IPR022911">
    <property type="entry name" value="Phe_tRNA_ligase_alpha1_bac"/>
</dbReference>
<dbReference type="InterPro" id="IPR002319">
    <property type="entry name" value="Phenylalanyl-tRNA_Synthase"/>
</dbReference>
<dbReference type="InterPro" id="IPR010978">
    <property type="entry name" value="tRNA-bd_arm"/>
</dbReference>
<dbReference type="NCBIfam" id="TIGR00468">
    <property type="entry name" value="pheS"/>
    <property type="match status" value="1"/>
</dbReference>
<dbReference type="PANTHER" id="PTHR11538:SF41">
    <property type="entry name" value="PHENYLALANINE--TRNA LIGASE, MITOCHONDRIAL"/>
    <property type="match status" value="1"/>
</dbReference>
<dbReference type="PANTHER" id="PTHR11538">
    <property type="entry name" value="PHENYLALANYL-TRNA SYNTHETASE"/>
    <property type="match status" value="1"/>
</dbReference>
<dbReference type="Pfam" id="PF02912">
    <property type="entry name" value="Phe_tRNA-synt_N"/>
    <property type="match status" value="1"/>
</dbReference>
<dbReference type="Pfam" id="PF01409">
    <property type="entry name" value="tRNA-synt_2d"/>
    <property type="match status" value="1"/>
</dbReference>
<dbReference type="SUPFAM" id="SSF55681">
    <property type="entry name" value="Class II aaRS and biotin synthetases"/>
    <property type="match status" value="1"/>
</dbReference>
<dbReference type="SUPFAM" id="SSF46589">
    <property type="entry name" value="tRNA-binding arm"/>
    <property type="match status" value="1"/>
</dbReference>
<dbReference type="PROSITE" id="PS50862">
    <property type="entry name" value="AA_TRNA_LIGASE_II"/>
    <property type="match status" value="1"/>
</dbReference>
<proteinExistence type="inferred from homology"/>
<reference key="1">
    <citation type="journal article" date="2011" name="J. Bacteriol.">
        <title>Complete genome sequence of the metabolically versatile plant growth-promoting endophyte, Variovorax paradoxus S110.</title>
        <authorList>
            <person name="Han J.I."/>
            <person name="Choi H.K."/>
            <person name="Lee S.W."/>
            <person name="Orwin P.M."/>
            <person name="Kim J."/>
            <person name="Laroe S.L."/>
            <person name="Kim T.G."/>
            <person name="O'Neil J."/>
            <person name="Leadbetter J.R."/>
            <person name="Lee S.Y."/>
            <person name="Hur C.G."/>
            <person name="Spain J.C."/>
            <person name="Ovchinnikova G."/>
            <person name="Goodwin L."/>
            <person name="Han C."/>
        </authorList>
    </citation>
    <scope>NUCLEOTIDE SEQUENCE [LARGE SCALE GENOMIC DNA]</scope>
    <source>
        <strain>S110</strain>
    </source>
</reference>
<sequence>MNELDSLVATARAAFAEAKTPAELENAKAQFLGKSGRITELMKGMAALSVDEKKSRGAAINVAKQAIEAALTERRQQLADEELSLQLRAEALDVSLPGRRRIPGGLHPVSRTLERIEEIFSSMGFDVADGPEIESDWHSFTSLNNPPNHPARSMQDTFYVDLNGDDGIPYNLRPHTSPMQVRYAHQHIKKYAAEFAAAAADATGTVKAPEIRVIAPGRTYRVDSDATHSPMFHQCEGLWLGENVSFKDLKVVFTDFCRTFFESDDLVLRFRPSFFPFTEPSAEIDIQFASGPLAGRWLEVAGSGQVHPNVVRNMGLDPERYIGFAFGMGPDRLTMLRYGVNDLRLFFDGDLRFLSQFQ</sequence>
<comment type="catalytic activity">
    <reaction evidence="1">
        <text>tRNA(Phe) + L-phenylalanine + ATP = L-phenylalanyl-tRNA(Phe) + AMP + diphosphate + H(+)</text>
        <dbReference type="Rhea" id="RHEA:19413"/>
        <dbReference type="Rhea" id="RHEA-COMP:9668"/>
        <dbReference type="Rhea" id="RHEA-COMP:9699"/>
        <dbReference type="ChEBI" id="CHEBI:15378"/>
        <dbReference type="ChEBI" id="CHEBI:30616"/>
        <dbReference type="ChEBI" id="CHEBI:33019"/>
        <dbReference type="ChEBI" id="CHEBI:58095"/>
        <dbReference type="ChEBI" id="CHEBI:78442"/>
        <dbReference type="ChEBI" id="CHEBI:78531"/>
        <dbReference type="ChEBI" id="CHEBI:456215"/>
        <dbReference type="EC" id="6.1.1.20"/>
    </reaction>
</comment>
<comment type="cofactor">
    <cofactor evidence="1">
        <name>Mg(2+)</name>
        <dbReference type="ChEBI" id="CHEBI:18420"/>
    </cofactor>
    <text evidence="1">Binds 2 magnesium ions per tetramer.</text>
</comment>
<comment type="subunit">
    <text evidence="1">Tetramer of two alpha and two beta subunits.</text>
</comment>
<comment type="subcellular location">
    <subcellularLocation>
        <location evidence="1">Cytoplasm</location>
    </subcellularLocation>
</comment>
<comment type="similarity">
    <text evidence="1">Belongs to the class-II aminoacyl-tRNA synthetase family. Phe-tRNA synthetase alpha subunit type 1 subfamily.</text>
</comment>
<evidence type="ECO:0000255" key="1">
    <source>
        <dbReference type="HAMAP-Rule" id="MF_00281"/>
    </source>
</evidence>
<accession>C5CUU6</accession>
<keyword id="KW-0030">Aminoacyl-tRNA synthetase</keyword>
<keyword id="KW-0067">ATP-binding</keyword>
<keyword id="KW-0963">Cytoplasm</keyword>
<keyword id="KW-0436">Ligase</keyword>
<keyword id="KW-0460">Magnesium</keyword>
<keyword id="KW-0479">Metal-binding</keyword>
<keyword id="KW-0547">Nucleotide-binding</keyword>
<keyword id="KW-0648">Protein biosynthesis</keyword>
<name>SYFA_VARPS</name>
<organism>
    <name type="scientific">Variovorax paradoxus (strain S110)</name>
    <dbReference type="NCBI Taxonomy" id="543728"/>
    <lineage>
        <taxon>Bacteria</taxon>
        <taxon>Pseudomonadati</taxon>
        <taxon>Pseudomonadota</taxon>
        <taxon>Betaproteobacteria</taxon>
        <taxon>Burkholderiales</taxon>
        <taxon>Comamonadaceae</taxon>
        <taxon>Variovorax</taxon>
    </lineage>
</organism>